<name>GSPG_VIBCH</name>
<accession>P45773</accession>
<accession>Q9JPZ6</accession>
<comment type="function">
    <text evidence="1 4">Core component of the type II secretion system required for the energy-dependent secretion of extracellular factors such as proteases and toxins from the periplasm (PubMed:21255118). Pseudopilin (pilin-like) protein that polymerizes to form the pseudopilus. Further polymerization triggers pseudopilus growth (By similarity).</text>
</comment>
<comment type="subunit">
    <text evidence="1 4">Type II secretion system is composed of four main components: the outer membrane complex, the inner membrane complex, the cytoplasmic secretion ATPase and the periplasm-spanning pseudopilus. Forms homomultimers (By similarity). Interacts with EspL (PubMed:21255118).</text>
</comment>
<comment type="subcellular location">
    <subcellularLocation>
        <location evidence="1">Cell inner membrane</location>
        <topology evidence="2">Single-pass membrane protein</topology>
    </subcellularLocation>
</comment>
<comment type="induction">
    <text evidence="5">By cyclic di-GMP and VpsR.</text>
</comment>
<comment type="PTM">
    <text evidence="1">Cleaved by the prepilin peptidase.</text>
</comment>
<comment type="PTM">
    <text evidence="1">Methylated by prepilin peptidase at the amino group of the N-terminal phenylalanine once the leader sequence is cleaved.</text>
</comment>
<comment type="similarity">
    <text evidence="6">Belongs to the GSP G family.</text>
</comment>
<proteinExistence type="evidence at protein level"/>
<gene>
    <name type="primary">epsG</name>
    <name type="ordered locus">VC_2730</name>
</gene>
<organism>
    <name type="scientific">Vibrio cholerae serotype O1 (strain ATCC 39315 / El Tor Inaba N16961)</name>
    <dbReference type="NCBI Taxonomy" id="243277"/>
    <lineage>
        <taxon>Bacteria</taxon>
        <taxon>Pseudomonadati</taxon>
        <taxon>Pseudomonadota</taxon>
        <taxon>Gammaproteobacteria</taxon>
        <taxon>Vibrionales</taxon>
        <taxon>Vibrionaceae</taxon>
        <taxon>Vibrio</taxon>
    </lineage>
</organism>
<protein>
    <recommendedName>
        <fullName>Type II secretion system core protein G</fullName>
        <shortName>T2SS core protein G</shortName>
    </recommendedName>
    <alternativeName>
        <fullName>Cholera toxin secretion protein EpsG</fullName>
    </alternativeName>
    <alternativeName>
        <fullName>General secretion pathway protein G</fullName>
    </alternativeName>
</protein>
<reference key="1">
    <citation type="thesis" date="1994" institute="Michigan State University" country="United States">
        <title>Organization of the general secretion pathway genes in Vibrio cholerae.</title>
        <authorList>
            <person name="Overbye L.J."/>
        </authorList>
    </citation>
    <scope>NUCLEOTIDE SEQUENCE [GENOMIC DNA]</scope>
    <source>
        <strain>El Tor TRH7000</strain>
    </source>
</reference>
<reference key="2">
    <citation type="journal article" date="2000" name="Nature">
        <title>DNA sequence of both chromosomes of the cholera pathogen Vibrio cholerae.</title>
        <authorList>
            <person name="Heidelberg J.F."/>
            <person name="Eisen J.A."/>
            <person name="Nelson W.C."/>
            <person name="Clayton R.A."/>
            <person name="Gwinn M.L."/>
            <person name="Dodson R.J."/>
            <person name="Haft D.H."/>
            <person name="Hickey E.K."/>
            <person name="Peterson J.D."/>
            <person name="Umayam L.A."/>
            <person name="Gill S.R."/>
            <person name="Nelson K.E."/>
            <person name="Read T.D."/>
            <person name="Tettelin H."/>
            <person name="Richardson D.L."/>
            <person name="Ermolaeva M.D."/>
            <person name="Vamathevan J.J."/>
            <person name="Bass S."/>
            <person name="Qin H."/>
            <person name="Dragoi I."/>
            <person name="Sellers P."/>
            <person name="McDonald L.A."/>
            <person name="Utterback T.R."/>
            <person name="Fleischmann R.D."/>
            <person name="Nierman W.C."/>
            <person name="White O."/>
            <person name="Salzberg S.L."/>
            <person name="Smith H.O."/>
            <person name="Colwell R.R."/>
            <person name="Mekalanos J.J."/>
            <person name="Venter J.C."/>
            <person name="Fraser C.M."/>
        </authorList>
    </citation>
    <scope>NUCLEOTIDE SEQUENCE [LARGE SCALE GENOMIC DNA]</scope>
    <source>
        <strain>ATCC 39315 / El Tor Inaba N16961</strain>
    </source>
</reference>
<reference key="3">
    <citation type="journal article" date="2011" name="Mol. Microbiol.">
        <title>In vivo cross-linking of EpsG to EpsL suggests a role for EpsL as an ATPase-pseudopilin coupling protein in the Type II secretion system of Vibrio cholerae.</title>
        <authorList>
            <person name="Gray M.D."/>
            <person name="Bagdasarian M."/>
            <person name="Hol W.G."/>
            <person name="Sandkvist M."/>
        </authorList>
    </citation>
    <scope>FUNCTION</scope>
    <scope>INTERACTION WITH ESPL</scope>
    <scope>MUTAGENESIS OF ASP-100 AND THR-121</scope>
</reference>
<reference key="4">
    <citation type="journal article" date="2017" name="J. Bacteriol.">
        <title>Cyclic Di-GMP and VpsR Induce the Expression of Type II Secretion in Vibrio cholerae.</title>
        <authorList>
            <person name="Sloup R.E."/>
            <person name="Konal A.E."/>
            <person name="Severin G.B."/>
            <person name="Korir M.L."/>
            <person name="Bagdasarian M.M."/>
            <person name="Bagdasarian M."/>
            <person name="Waters C.M."/>
        </authorList>
    </citation>
    <scope>INDUCTION BY CYCLIC DI-GMP AND VPSR</scope>
</reference>
<sequence>MKKMRKQTGFTLLEVMVVVVILGILASFVVPNLLGNKEKADQQKAVTDIVALENALDMYKLDNSVYPTTDQGLEALVTKPTNPEPRNYREGGYIKRLPKDPWGNDYQYLSPGDKGTIDVFTLGADGQEGGEGTGADIGNWNIQDFQ</sequence>
<keyword id="KW-0002">3D-structure</keyword>
<keyword id="KW-0997">Cell inner membrane</keyword>
<keyword id="KW-1003">Cell membrane</keyword>
<keyword id="KW-0472">Membrane</keyword>
<keyword id="KW-0488">Methylation</keyword>
<keyword id="KW-0653">Protein transport</keyword>
<keyword id="KW-1185">Reference proteome</keyword>
<keyword id="KW-0812">Transmembrane</keyword>
<keyword id="KW-1133">Transmembrane helix</keyword>
<keyword id="KW-0813">Transport</keyword>
<evidence type="ECO:0000250" key="1">
    <source>
        <dbReference type="UniProtKB" id="Q00514"/>
    </source>
</evidence>
<evidence type="ECO:0000255" key="2"/>
<evidence type="ECO:0000255" key="3">
    <source>
        <dbReference type="PROSITE-ProRule" id="PRU01070"/>
    </source>
</evidence>
<evidence type="ECO:0000269" key="4">
    <source>
    </source>
</evidence>
<evidence type="ECO:0000269" key="5">
    <source>
    </source>
</evidence>
<evidence type="ECO:0000305" key="6"/>
<evidence type="ECO:0007829" key="7">
    <source>
        <dbReference type="PDB" id="3FU1"/>
    </source>
</evidence>
<feature type="propeptide" id="PRO_0000449509" description="Leader sequence" evidence="1">
    <location>
        <begin position="1"/>
        <end position="9"/>
    </location>
</feature>
<feature type="chain" id="PRO_0000024211" description="Type II secretion system core protein G">
    <location>
        <begin position="10"/>
        <end position="146"/>
    </location>
</feature>
<feature type="transmembrane region" description="Helical" evidence="2">
    <location>
        <begin position="10"/>
        <end position="30"/>
    </location>
</feature>
<feature type="modified residue" description="N-methylphenylalanine" evidence="3">
    <location>
        <position position="10"/>
    </location>
</feature>
<feature type="mutagenesis site" description="Complete loss of secretion." evidence="4">
    <original>D</original>
    <variation>E</variation>
    <location>
        <position position="100"/>
    </location>
</feature>
<feature type="mutagenesis site" description="Complete loss of secretion." evidence="4">
    <original>T</original>
    <variation>L</variation>
    <location>
        <position position="121"/>
    </location>
</feature>
<feature type="helix" evidence="7">
    <location>
        <begin position="36"/>
        <end position="63"/>
    </location>
</feature>
<feature type="turn" evidence="7">
    <location>
        <begin position="69"/>
        <end position="71"/>
    </location>
</feature>
<feature type="helix" evidence="7">
    <location>
        <begin position="73"/>
        <end position="76"/>
    </location>
</feature>
<feature type="strand" evidence="7">
    <location>
        <begin position="93"/>
        <end position="96"/>
    </location>
</feature>
<feature type="strand" evidence="7">
    <location>
        <begin position="107"/>
        <end position="111"/>
    </location>
</feature>
<feature type="strand" evidence="7">
    <location>
        <begin position="113"/>
        <end position="121"/>
    </location>
</feature>
<feature type="turn" evidence="7">
    <location>
        <begin position="123"/>
        <end position="126"/>
    </location>
</feature>
<feature type="strand" evidence="7">
    <location>
        <begin position="127"/>
        <end position="129"/>
    </location>
</feature>
<feature type="helix" evidence="7">
    <location>
        <begin position="132"/>
        <end position="134"/>
    </location>
</feature>
<feature type="helix" evidence="7">
    <location>
        <begin position="139"/>
        <end position="145"/>
    </location>
</feature>
<dbReference type="EMBL" id="L33796">
    <property type="protein sequence ID" value="AAA58788.1"/>
    <property type="molecule type" value="Genomic_DNA"/>
</dbReference>
<dbReference type="EMBL" id="AE003852">
    <property type="protein sequence ID" value="AAF95870.1"/>
    <property type="molecule type" value="Genomic_DNA"/>
</dbReference>
<dbReference type="PIR" id="D82041">
    <property type="entry name" value="D82041"/>
</dbReference>
<dbReference type="RefSeq" id="NP_232357.1">
    <property type="nucleotide sequence ID" value="NC_002505.1"/>
</dbReference>
<dbReference type="PDB" id="3FU1">
    <property type="method" value="X-ray"/>
    <property type="resolution" value="1.90 A"/>
    <property type="chains" value="A/B=35-146"/>
</dbReference>
<dbReference type="PDB" id="4LW9">
    <property type="method" value="X-ray"/>
    <property type="resolution" value="1.90 A"/>
    <property type="chains" value="A/B/C/D/E/F/I/J/K/L/Q/R=35-146"/>
</dbReference>
<dbReference type="PDBsum" id="3FU1"/>
<dbReference type="PDBsum" id="4LW9"/>
<dbReference type="SMR" id="P45773"/>
<dbReference type="STRING" id="243277.VC_2730"/>
<dbReference type="DNASU" id="2614893"/>
<dbReference type="EnsemblBacteria" id="AAF95870">
    <property type="protein sequence ID" value="AAF95870"/>
    <property type="gene ID" value="VC_2730"/>
</dbReference>
<dbReference type="KEGG" id="vch:VC_2730"/>
<dbReference type="PATRIC" id="fig|243277.26.peg.2605"/>
<dbReference type="eggNOG" id="COG2165">
    <property type="taxonomic scope" value="Bacteria"/>
</dbReference>
<dbReference type="HOGENOM" id="CLU_091705_2_1_6"/>
<dbReference type="EvolutionaryTrace" id="P45773"/>
<dbReference type="Proteomes" id="UP000000584">
    <property type="component" value="Chromosome 1"/>
</dbReference>
<dbReference type="GO" id="GO:0005886">
    <property type="term" value="C:plasma membrane"/>
    <property type="evidence" value="ECO:0007669"/>
    <property type="project" value="UniProtKB-SubCell"/>
</dbReference>
<dbReference type="GO" id="GO:0015627">
    <property type="term" value="C:type II protein secretion system complex"/>
    <property type="evidence" value="ECO:0000318"/>
    <property type="project" value="GO_Central"/>
</dbReference>
<dbReference type="GO" id="GO:0015628">
    <property type="term" value="P:protein secretion by the type II secretion system"/>
    <property type="evidence" value="ECO:0000318"/>
    <property type="project" value="GO_Central"/>
</dbReference>
<dbReference type="FunFam" id="3.30.700.10:FF:000001">
    <property type="entry name" value="General secretion pathway protein G"/>
    <property type="match status" value="1"/>
</dbReference>
<dbReference type="Gene3D" id="3.30.700.10">
    <property type="entry name" value="Glycoprotein, Type 4 Pilin"/>
    <property type="match status" value="1"/>
</dbReference>
<dbReference type="InterPro" id="IPR000983">
    <property type="entry name" value="Bac_GSPG_pilin"/>
</dbReference>
<dbReference type="InterPro" id="IPR012902">
    <property type="entry name" value="N_methyl_site"/>
</dbReference>
<dbReference type="InterPro" id="IPR045584">
    <property type="entry name" value="Pilin-like"/>
</dbReference>
<dbReference type="InterPro" id="IPR013545">
    <property type="entry name" value="T2SS_protein-GspG_C"/>
</dbReference>
<dbReference type="InterPro" id="IPR050470">
    <property type="entry name" value="T4P/T2SS_Core"/>
</dbReference>
<dbReference type="InterPro" id="IPR010054">
    <property type="entry name" value="Type2_sec_GspG"/>
</dbReference>
<dbReference type="NCBIfam" id="TIGR02532">
    <property type="entry name" value="IV_pilin_GFxxxE"/>
    <property type="match status" value="1"/>
</dbReference>
<dbReference type="NCBIfam" id="TIGR01710">
    <property type="entry name" value="typeII_sec_gspG"/>
    <property type="match status" value="1"/>
</dbReference>
<dbReference type="PANTHER" id="PTHR30093">
    <property type="entry name" value="GENERAL SECRETION PATHWAY PROTEIN G"/>
    <property type="match status" value="1"/>
</dbReference>
<dbReference type="PANTHER" id="PTHR30093:SF44">
    <property type="entry name" value="TYPE II SECRETION SYSTEM CORE PROTEIN G"/>
    <property type="match status" value="1"/>
</dbReference>
<dbReference type="Pfam" id="PF07963">
    <property type="entry name" value="N_methyl"/>
    <property type="match status" value="1"/>
</dbReference>
<dbReference type="Pfam" id="PF08334">
    <property type="entry name" value="T2SSG"/>
    <property type="match status" value="1"/>
</dbReference>
<dbReference type="PRINTS" id="PR00813">
    <property type="entry name" value="BCTERIALGSPG"/>
</dbReference>
<dbReference type="SUPFAM" id="SSF54523">
    <property type="entry name" value="Pili subunits"/>
    <property type="match status" value="1"/>
</dbReference>
<dbReference type="PROSITE" id="PS00409">
    <property type="entry name" value="PROKAR_NTER_METHYL"/>
    <property type="match status" value="1"/>
</dbReference>